<sequence>MAKITKLEVQKRNKERVNVFLDEDYAFSISAELIYKEGIKVKDSVNSEKLKVLANKDAIIKCREAAIKTIERNLKTEKQVRDKLNLKGYDEDSITKAIDFLKEYNFLDDKDYANKFVKDKLKCQGSNKIRYSLMQKGVSKDVIEEELSSIDKENEKESALILAQKKLNSLRKTEDDTYKISNKLYRFLLSKGYGYDIIKDVVKEAINFELYD</sequence>
<accession>B2TNB1</accession>
<proteinExistence type="inferred from homology"/>
<protein>
    <recommendedName>
        <fullName evidence="1">Regulatory protein RecX</fullName>
    </recommendedName>
</protein>
<evidence type="ECO:0000255" key="1">
    <source>
        <dbReference type="HAMAP-Rule" id="MF_01114"/>
    </source>
</evidence>
<gene>
    <name evidence="1" type="primary">recX</name>
    <name type="ordered locus">CLL_A2529</name>
</gene>
<dbReference type="EMBL" id="CP001056">
    <property type="protein sequence ID" value="ACD23891.1"/>
    <property type="molecule type" value="Genomic_DNA"/>
</dbReference>
<dbReference type="SMR" id="B2TNB1"/>
<dbReference type="KEGG" id="cbk:CLL_A2529"/>
<dbReference type="PATRIC" id="fig|935198.13.peg.2487"/>
<dbReference type="HOGENOM" id="CLU_066607_4_1_9"/>
<dbReference type="Proteomes" id="UP000001195">
    <property type="component" value="Chromosome"/>
</dbReference>
<dbReference type="GO" id="GO:0005737">
    <property type="term" value="C:cytoplasm"/>
    <property type="evidence" value="ECO:0007669"/>
    <property type="project" value="UniProtKB-SubCell"/>
</dbReference>
<dbReference type="GO" id="GO:0006282">
    <property type="term" value="P:regulation of DNA repair"/>
    <property type="evidence" value="ECO:0007669"/>
    <property type="project" value="UniProtKB-UniRule"/>
</dbReference>
<dbReference type="Gene3D" id="1.10.10.10">
    <property type="entry name" value="Winged helix-like DNA-binding domain superfamily/Winged helix DNA-binding domain"/>
    <property type="match status" value="3"/>
</dbReference>
<dbReference type="HAMAP" id="MF_01114">
    <property type="entry name" value="RecX"/>
    <property type="match status" value="1"/>
</dbReference>
<dbReference type="InterPro" id="IPR053926">
    <property type="entry name" value="RecX_HTH_1st"/>
</dbReference>
<dbReference type="InterPro" id="IPR053924">
    <property type="entry name" value="RecX_HTH_2nd"/>
</dbReference>
<dbReference type="InterPro" id="IPR053925">
    <property type="entry name" value="RecX_HTH_3rd"/>
</dbReference>
<dbReference type="InterPro" id="IPR003783">
    <property type="entry name" value="Regulatory_RecX"/>
</dbReference>
<dbReference type="InterPro" id="IPR036388">
    <property type="entry name" value="WH-like_DNA-bd_sf"/>
</dbReference>
<dbReference type="NCBIfam" id="NF001058">
    <property type="entry name" value="PRK00117.4-1"/>
    <property type="match status" value="1"/>
</dbReference>
<dbReference type="PANTHER" id="PTHR33602">
    <property type="entry name" value="REGULATORY PROTEIN RECX FAMILY PROTEIN"/>
    <property type="match status" value="1"/>
</dbReference>
<dbReference type="PANTHER" id="PTHR33602:SF1">
    <property type="entry name" value="REGULATORY PROTEIN RECX FAMILY PROTEIN"/>
    <property type="match status" value="1"/>
</dbReference>
<dbReference type="Pfam" id="PF21982">
    <property type="entry name" value="RecX_HTH1"/>
    <property type="match status" value="1"/>
</dbReference>
<dbReference type="Pfam" id="PF02631">
    <property type="entry name" value="RecX_HTH2"/>
    <property type="match status" value="1"/>
</dbReference>
<dbReference type="Pfam" id="PF21981">
    <property type="entry name" value="RecX_HTH3"/>
    <property type="match status" value="1"/>
</dbReference>
<reference key="1">
    <citation type="submission" date="2008-04" db="EMBL/GenBank/DDBJ databases">
        <title>Complete sequence of Clostridium botulinum strain Eklund.</title>
        <authorList>
            <person name="Brinkac L.M."/>
            <person name="Brown J.L."/>
            <person name="Bruce D."/>
            <person name="Detter C."/>
            <person name="Munk C."/>
            <person name="Smith L.A."/>
            <person name="Smith T.J."/>
            <person name="Sutton G."/>
            <person name="Brettin T.S."/>
        </authorList>
    </citation>
    <scope>NUCLEOTIDE SEQUENCE [LARGE SCALE GENOMIC DNA]</scope>
    <source>
        <strain>Eklund 17B / Type B</strain>
    </source>
</reference>
<feature type="chain" id="PRO_1000137159" description="Regulatory protein RecX">
    <location>
        <begin position="1"/>
        <end position="212"/>
    </location>
</feature>
<keyword id="KW-0963">Cytoplasm</keyword>
<comment type="function">
    <text evidence="1">Modulates RecA activity.</text>
</comment>
<comment type="subcellular location">
    <subcellularLocation>
        <location evidence="1">Cytoplasm</location>
    </subcellularLocation>
</comment>
<comment type="similarity">
    <text evidence="1">Belongs to the RecX family.</text>
</comment>
<name>RECX_CLOBB</name>
<organism>
    <name type="scientific">Clostridium botulinum (strain Eklund 17B / Type B)</name>
    <dbReference type="NCBI Taxonomy" id="935198"/>
    <lineage>
        <taxon>Bacteria</taxon>
        <taxon>Bacillati</taxon>
        <taxon>Bacillota</taxon>
        <taxon>Clostridia</taxon>
        <taxon>Eubacteriales</taxon>
        <taxon>Clostridiaceae</taxon>
        <taxon>Clostridium</taxon>
    </lineage>
</organism>